<name>RS9_YERPN</name>
<comment type="similarity">
    <text evidence="1">Belongs to the universal ribosomal protein uS9 family.</text>
</comment>
<feature type="chain" id="PRO_1000051370" description="Small ribosomal subunit protein uS9">
    <location>
        <begin position="1"/>
        <end position="130"/>
    </location>
</feature>
<protein>
    <recommendedName>
        <fullName evidence="1">Small ribosomal subunit protein uS9</fullName>
    </recommendedName>
    <alternativeName>
        <fullName evidence="2">30S ribosomal protein S9</fullName>
    </alternativeName>
</protein>
<sequence length="130" mass="14769">MAENQYYGTGRRKSSSARVFLKPGSGKIVINQRSLEVYFGRETARMVVNQPLELVDMVTKFDMYITVKGGGISGQAGAIRHGITRALMEYDESLRGELRKAGFVTRDAREVERKKVGLRKARRRPQFSKR</sequence>
<proteinExistence type="inferred from homology"/>
<keyword id="KW-0687">Ribonucleoprotein</keyword>
<keyword id="KW-0689">Ribosomal protein</keyword>
<dbReference type="EMBL" id="CP000305">
    <property type="protein sequence ID" value="ABG19771.1"/>
    <property type="molecule type" value="Genomic_DNA"/>
</dbReference>
<dbReference type="EMBL" id="ACNQ01000019">
    <property type="protein sequence ID" value="EEO74321.1"/>
    <property type="molecule type" value="Genomic_DNA"/>
</dbReference>
<dbReference type="RefSeq" id="WP_002210133.1">
    <property type="nucleotide sequence ID" value="NZ_ACNQ01000019.1"/>
</dbReference>
<dbReference type="SMR" id="Q1CE09"/>
<dbReference type="GeneID" id="96662997"/>
<dbReference type="KEGG" id="ypn:YPN_3444"/>
<dbReference type="HOGENOM" id="CLU_046483_2_1_6"/>
<dbReference type="Proteomes" id="UP000008936">
    <property type="component" value="Chromosome"/>
</dbReference>
<dbReference type="GO" id="GO:0022627">
    <property type="term" value="C:cytosolic small ribosomal subunit"/>
    <property type="evidence" value="ECO:0007669"/>
    <property type="project" value="TreeGrafter"/>
</dbReference>
<dbReference type="GO" id="GO:0003723">
    <property type="term" value="F:RNA binding"/>
    <property type="evidence" value="ECO:0007669"/>
    <property type="project" value="TreeGrafter"/>
</dbReference>
<dbReference type="GO" id="GO:0003735">
    <property type="term" value="F:structural constituent of ribosome"/>
    <property type="evidence" value="ECO:0007669"/>
    <property type="project" value="InterPro"/>
</dbReference>
<dbReference type="GO" id="GO:0006412">
    <property type="term" value="P:translation"/>
    <property type="evidence" value="ECO:0007669"/>
    <property type="project" value="UniProtKB-UniRule"/>
</dbReference>
<dbReference type="FunFam" id="3.30.230.10:FF:000001">
    <property type="entry name" value="30S ribosomal protein S9"/>
    <property type="match status" value="1"/>
</dbReference>
<dbReference type="Gene3D" id="3.30.230.10">
    <property type="match status" value="1"/>
</dbReference>
<dbReference type="HAMAP" id="MF_00532_B">
    <property type="entry name" value="Ribosomal_uS9_B"/>
    <property type="match status" value="1"/>
</dbReference>
<dbReference type="InterPro" id="IPR020568">
    <property type="entry name" value="Ribosomal_Su5_D2-typ_SF"/>
</dbReference>
<dbReference type="InterPro" id="IPR000754">
    <property type="entry name" value="Ribosomal_uS9"/>
</dbReference>
<dbReference type="InterPro" id="IPR023035">
    <property type="entry name" value="Ribosomal_uS9_bac/plastid"/>
</dbReference>
<dbReference type="InterPro" id="IPR020574">
    <property type="entry name" value="Ribosomal_uS9_CS"/>
</dbReference>
<dbReference type="InterPro" id="IPR014721">
    <property type="entry name" value="Ribsml_uS5_D2-typ_fold_subgr"/>
</dbReference>
<dbReference type="NCBIfam" id="NF001099">
    <property type="entry name" value="PRK00132.1"/>
    <property type="match status" value="1"/>
</dbReference>
<dbReference type="PANTHER" id="PTHR21569">
    <property type="entry name" value="RIBOSOMAL PROTEIN S9"/>
    <property type="match status" value="1"/>
</dbReference>
<dbReference type="PANTHER" id="PTHR21569:SF1">
    <property type="entry name" value="SMALL RIBOSOMAL SUBUNIT PROTEIN US9M"/>
    <property type="match status" value="1"/>
</dbReference>
<dbReference type="Pfam" id="PF00380">
    <property type="entry name" value="Ribosomal_S9"/>
    <property type="match status" value="1"/>
</dbReference>
<dbReference type="SUPFAM" id="SSF54211">
    <property type="entry name" value="Ribosomal protein S5 domain 2-like"/>
    <property type="match status" value="1"/>
</dbReference>
<dbReference type="PROSITE" id="PS00360">
    <property type="entry name" value="RIBOSOMAL_S9"/>
    <property type="match status" value="1"/>
</dbReference>
<gene>
    <name evidence="1" type="primary">rpsI</name>
    <name type="ordered locus">YPN_3444</name>
    <name type="ORF">YP516_3916</name>
</gene>
<organism>
    <name type="scientific">Yersinia pestis bv. Antiqua (strain Nepal516)</name>
    <dbReference type="NCBI Taxonomy" id="377628"/>
    <lineage>
        <taxon>Bacteria</taxon>
        <taxon>Pseudomonadati</taxon>
        <taxon>Pseudomonadota</taxon>
        <taxon>Gammaproteobacteria</taxon>
        <taxon>Enterobacterales</taxon>
        <taxon>Yersiniaceae</taxon>
        <taxon>Yersinia</taxon>
    </lineage>
</organism>
<reference key="1">
    <citation type="journal article" date="2006" name="J. Bacteriol.">
        <title>Complete genome sequence of Yersinia pestis strains Antiqua and Nepal516: evidence of gene reduction in an emerging pathogen.</title>
        <authorList>
            <person name="Chain P.S.G."/>
            <person name="Hu P."/>
            <person name="Malfatti S.A."/>
            <person name="Radnedge L."/>
            <person name="Larimer F."/>
            <person name="Vergez L.M."/>
            <person name="Worsham P."/>
            <person name="Chu M.C."/>
            <person name="Andersen G.L."/>
        </authorList>
    </citation>
    <scope>NUCLEOTIDE SEQUENCE [LARGE SCALE GENOMIC DNA]</scope>
    <source>
        <strain>Nepal516</strain>
    </source>
</reference>
<reference key="2">
    <citation type="submission" date="2009-04" db="EMBL/GenBank/DDBJ databases">
        <title>Yersinia pestis Nepal516A whole genome shotgun sequencing project.</title>
        <authorList>
            <person name="Plunkett G. III"/>
            <person name="Anderson B.D."/>
            <person name="Baumler D.J."/>
            <person name="Burland V."/>
            <person name="Cabot E.L."/>
            <person name="Glasner J.D."/>
            <person name="Mau B."/>
            <person name="Neeno-Eckwall E."/>
            <person name="Perna N.T."/>
            <person name="Munk A.C."/>
            <person name="Tapia R."/>
            <person name="Green L.D."/>
            <person name="Rogers Y.C."/>
            <person name="Detter J.C."/>
            <person name="Bruce D.C."/>
            <person name="Brettin T.S."/>
        </authorList>
    </citation>
    <scope>NUCLEOTIDE SEQUENCE [LARGE SCALE GENOMIC DNA]</scope>
    <source>
        <strain>Nepal516</strain>
    </source>
</reference>
<evidence type="ECO:0000255" key="1">
    <source>
        <dbReference type="HAMAP-Rule" id="MF_00532"/>
    </source>
</evidence>
<evidence type="ECO:0000305" key="2"/>
<accession>Q1CE09</accession>
<accession>D1Q1B8</accession>